<proteinExistence type="inferred from homology"/>
<evidence type="ECO:0000255" key="1">
    <source>
        <dbReference type="HAMAP-Rule" id="MF_01420"/>
    </source>
</evidence>
<accession>B2GH83</accession>
<feature type="chain" id="PRO_0000376492" description="Probable cell division protein WhiA">
    <location>
        <begin position="1"/>
        <end position="330"/>
    </location>
</feature>
<feature type="DNA-binding region" description="H-T-H motif" evidence="1">
    <location>
        <begin position="275"/>
        <end position="308"/>
    </location>
</feature>
<name>WHIA_KOCRD</name>
<sequence>MALTASVKEELAHLQVRKSAVRAAELSALLRFAGGLHIVAGRIVVEAELDTESVARRAVRTVGEVFGHECELGVMSGGGLRREPTWVVRVARDGEALARRTGLLDAHGRPVRGLPPTVVNGSVDESAAVIRGAFLAHGSLTEPGRAAAMEFTCPGPEAALALVGSARRLDVLAKARQVRGVDRVVVRDGDTIAALLTRLGAHRALLQWEDRRMRKEVRATANRLANFDDANLRRSAQAAVTAGAKVERALDILGDEAPEHLRAAGRLRVANKQASLDELGRLSDPPLTKDAIAGRIRRLLAMADRRAEELGIATTTEFAAQAGGAQARAH</sequence>
<organism>
    <name type="scientific">Kocuria rhizophila (strain ATCC 9341 / DSM 348 / NBRC 103217 / DC2201)</name>
    <dbReference type="NCBI Taxonomy" id="378753"/>
    <lineage>
        <taxon>Bacteria</taxon>
        <taxon>Bacillati</taxon>
        <taxon>Actinomycetota</taxon>
        <taxon>Actinomycetes</taxon>
        <taxon>Micrococcales</taxon>
        <taxon>Micrococcaceae</taxon>
        <taxon>Kocuria</taxon>
    </lineage>
</organism>
<keyword id="KW-0131">Cell cycle</keyword>
<keyword id="KW-0132">Cell division</keyword>
<keyword id="KW-0238">DNA-binding</keyword>
<keyword id="KW-1185">Reference proteome</keyword>
<comment type="function">
    <text evidence="1">Involved in cell division and chromosome segregation.</text>
</comment>
<comment type="similarity">
    <text evidence="1">Belongs to the WhiA family.</text>
</comment>
<dbReference type="EMBL" id="AP009152">
    <property type="protein sequence ID" value="BAG29556.1"/>
    <property type="molecule type" value="Genomic_DNA"/>
</dbReference>
<dbReference type="RefSeq" id="WP_012398277.1">
    <property type="nucleotide sequence ID" value="NC_010617.1"/>
</dbReference>
<dbReference type="SMR" id="B2GH83"/>
<dbReference type="STRING" id="378753.KRH_12090"/>
<dbReference type="KEGG" id="krh:KRH_12090"/>
<dbReference type="eggNOG" id="COG1481">
    <property type="taxonomic scope" value="Bacteria"/>
</dbReference>
<dbReference type="HOGENOM" id="CLU_053282_0_0_11"/>
<dbReference type="OrthoDB" id="5197218at2"/>
<dbReference type="Proteomes" id="UP000008838">
    <property type="component" value="Chromosome"/>
</dbReference>
<dbReference type="GO" id="GO:0003677">
    <property type="term" value="F:DNA binding"/>
    <property type="evidence" value="ECO:0007669"/>
    <property type="project" value="UniProtKB-UniRule"/>
</dbReference>
<dbReference type="GO" id="GO:0051301">
    <property type="term" value="P:cell division"/>
    <property type="evidence" value="ECO:0007669"/>
    <property type="project" value="UniProtKB-UniRule"/>
</dbReference>
<dbReference type="GO" id="GO:0043937">
    <property type="term" value="P:regulation of sporulation"/>
    <property type="evidence" value="ECO:0007669"/>
    <property type="project" value="InterPro"/>
</dbReference>
<dbReference type="FunFam" id="3.10.28.10:FF:000001">
    <property type="entry name" value="Probable cell division protein WhiA"/>
    <property type="match status" value="1"/>
</dbReference>
<dbReference type="Gene3D" id="3.10.28.10">
    <property type="entry name" value="Homing endonucleases"/>
    <property type="match status" value="1"/>
</dbReference>
<dbReference type="HAMAP" id="MF_01420">
    <property type="entry name" value="HTH_type_WhiA"/>
    <property type="match status" value="1"/>
</dbReference>
<dbReference type="InterPro" id="IPR027434">
    <property type="entry name" value="Homing_endonucl"/>
</dbReference>
<dbReference type="InterPro" id="IPR018478">
    <property type="entry name" value="Sporu_reg_WhiA_N_dom"/>
</dbReference>
<dbReference type="InterPro" id="IPR003802">
    <property type="entry name" value="Sporulation_regulator_WhiA"/>
</dbReference>
<dbReference type="InterPro" id="IPR023054">
    <property type="entry name" value="Sporulation_regulator_WhiA_C"/>
</dbReference>
<dbReference type="InterPro" id="IPR039518">
    <property type="entry name" value="WhiA_LAGLIDADG_dom"/>
</dbReference>
<dbReference type="NCBIfam" id="TIGR00647">
    <property type="entry name" value="DNA_bind_WhiA"/>
    <property type="match status" value="1"/>
</dbReference>
<dbReference type="PANTHER" id="PTHR37307">
    <property type="entry name" value="CELL DIVISION PROTEIN WHIA-RELATED"/>
    <property type="match status" value="1"/>
</dbReference>
<dbReference type="PANTHER" id="PTHR37307:SF1">
    <property type="entry name" value="CELL DIVISION PROTEIN WHIA-RELATED"/>
    <property type="match status" value="1"/>
</dbReference>
<dbReference type="Pfam" id="PF02650">
    <property type="entry name" value="HTH_WhiA"/>
    <property type="match status" value="1"/>
</dbReference>
<dbReference type="Pfam" id="PF14527">
    <property type="entry name" value="LAGLIDADG_WhiA"/>
    <property type="match status" value="1"/>
</dbReference>
<dbReference type="Pfam" id="PF10298">
    <property type="entry name" value="WhiA_N"/>
    <property type="match status" value="1"/>
</dbReference>
<gene>
    <name evidence="1" type="primary">whiA</name>
    <name type="ordered locus">KRH_12090</name>
</gene>
<protein>
    <recommendedName>
        <fullName evidence="1">Probable cell division protein WhiA</fullName>
    </recommendedName>
</protein>
<reference key="1">
    <citation type="journal article" date="2008" name="J. Bacteriol.">
        <title>Complete genome sequence of the soil actinomycete Kocuria rhizophila.</title>
        <authorList>
            <person name="Takarada H."/>
            <person name="Sekine M."/>
            <person name="Kosugi H."/>
            <person name="Matsuo Y."/>
            <person name="Fujisawa T."/>
            <person name="Omata S."/>
            <person name="Kishi E."/>
            <person name="Shimizu A."/>
            <person name="Tsukatani N."/>
            <person name="Tanikawa S."/>
            <person name="Fujita N."/>
            <person name="Harayama S."/>
        </authorList>
    </citation>
    <scope>NUCLEOTIDE SEQUENCE [LARGE SCALE GENOMIC DNA]</scope>
    <source>
        <strain>ATCC 9341 / DSM 348 / NBRC 103217 / DC2201</strain>
    </source>
</reference>